<sequence>MASAAVTPKLGWVQHQVTNGLHAVVGQVCRHPIHTLLVTALIAATTYLHVLEGTFRAANLGPGSKTDAAPFDVQSFLWGSRSLRLGETSSWRWQVGDLSEATGDGQVNHHWALVTLSFPGASVDDRSPAFLWNALPDSVGAEPITPTSNFFTSISNEFSLAFRVPYTQLSDFLEAVEFVASDKEDRSWAIRFPHGEGKPISLGRWLGNSWLSFLHRAKHAETVDMAIIGLGYLALNMTLVSLFRAMRQLGSRFWLAASVLLSGAFAFVFGLGVTTACGVPVDMLLLSEGIPFLVLTVGFEKPIRFTRAVLYASNQLRRGLQQRDVADKHDSRQRHMIPNAMLFAINREGWSIVQSYLLEIGALALGAVFRPRERFGQFCFLAAWMVLFDAILLFTFYATILCVKLEVTRMQNPGTLDLADDQHGPRIFGYKVNPTSLARWKLIMVGGFVLFNVLQLSSFFYRIMGGFMTNAALTPTTVSPFKVAANGLNDIYLAARAGGVETWVTVLPPIRYVMEASGLEMSAGRRPVFDGVLAGLESPLGRLCLMGALVFSLYLNNHLIPAARWHFSPGAPKESAAPAPPSSPASVPSAVPVPAPSSRSFEEIEALFKANQAESLTDDELAELCLRGKIAGYSLEKTLESIASAGSSSTATTRLEAFTRAVRIRRAAVSRTPSTRDLSGGIQESLLPYRNYNYELVHGACCENVIGYLPLPLGLAGPMVIDGQAYFIPMATTEGVLVASASRGCKAINTGGGAVTMLKGDGMTRGPCLGFPSAKRAAEAQRWVESPVGHQVLTDAFNATSRFARLQTLTVAQAGTYLYIRFRTTTGDAMGMNMISKGVEKALQAMTAHGFPDMNTITLSGNFCADKKSAAINWIGGRGKSVIAEATIPADTVRKVLKTDIDALVELNTAKNLVGSAMAGSMGGFNAHASNLVQAVFLATGQDPAQNVESSSCITTMKKIDGNLHIAVSMPSMEVGTIGGGTILEAQGAMLDLLGVRGAHPTDPGANARRLARIVAAAVLAGELSTCSALAAGHLVNAHMRHNRSAASSEKK</sequence>
<reference key="1">
    <citation type="journal article" date="2008" name="J. Agric. Food Chem.">
        <title>Cloning and characterization of monacolin K biosynthetic gene cluster from Monascus pilosus.</title>
        <authorList>
            <person name="Chen Y.P."/>
            <person name="Tseng C.P."/>
            <person name="Liaw L.L."/>
            <person name="Wang C.L."/>
            <person name="Chen I.C."/>
            <person name="Wu W.J."/>
            <person name="Wu M.D."/>
            <person name="Yuan G.F."/>
        </authorList>
    </citation>
    <scope>NUCLEOTIDE SEQUENCE [GENOMIC DNA]</scope>
    <scope>FUNCTION</scope>
</reference>
<reference key="2">
    <citation type="journal article" date="2009" name="Biotechnol. Lett.">
        <title>Identification of mokB involved in monacolin K biosynthesis in Monascus pilosus.</title>
        <authorList>
            <person name="Sakai K."/>
            <person name="Kinoshita H."/>
            <person name="Nihira T."/>
        </authorList>
    </citation>
    <scope>FUNCTION</scope>
</reference>
<reference key="3">
    <citation type="journal article" date="2010" name="J. Agric. Food Chem.">
        <title>Identification of the mokH gene encoding transcription factor for the upregulation of monacolin K biosynthesis in Monascus pilosus.</title>
        <authorList>
            <person name="Chen Y.-P."/>
            <person name="Yuan G.-F."/>
            <person name="Hsieh S.-Y."/>
            <person name="Lin Y.-S."/>
            <person name="Wang W.-Y."/>
            <person name="Liaw L.-L."/>
            <person name="Tseng C.-P."/>
        </authorList>
    </citation>
    <scope>INDUCTION</scope>
</reference>
<reference key="4">
    <citation type="journal article" date="2011" name="Biosci. Biotechnol. Biochem.">
        <title>Simultaneous enrichment of deglycosylated ginsenosides and monacolin K in red ginseng by fermentation with Monascus pilosus.</title>
        <authorList>
            <person name="Hong S.Y."/>
            <person name="Oh J.H."/>
            <person name="Lee I."/>
        </authorList>
    </citation>
    <scope>BIOTECHNOLOGY</scope>
</reference>
<organism evidence="13">
    <name type="scientific">Monascus pilosus</name>
    <name type="common">Red mold</name>
    <dbReference type="NCBI Taxonomy" id="89488"/>
    <lineage>
        <taxon>Eukaryota</taxon>
        <taxon>Fungi</taxon>
        <taxon>Dikarya</taxon>
        <taxon>Ascomycota</taxon>
        <taxon>Pezizomycotina</taxon>
        <taxon>Eurotiomycetes</taxon>
        <taxon>Eurotiomycetidae</taxon>
        <taxon>Eurotiales</taxon>
        <taxon>Aspergillaceae</taxon>
        <taxon>Monascus</taxon>
    </lineage>
</organism>
<evidence type="ECO:0000250" key="1">
    <source>
        <dbReference type="UniProtKB" id="P04035"/>
    </source>
</evidence>
<evidence type="ECO:0000250" key="2">
    <source>
        <dbReference type="UniProtKB" id="Q0C8M2"/>
    </source>
</evidence>
<evidence type="ECO:0000255" key="3"/>
<evidence type="ECO:0000255" key="4">
    <source>
        <dbReference type="PROSITE-ProRule" id="PRU00199"/>
    </source>
</evidence>
<evidence type="ECO:0000255" key="5">
    <source>
        <dbReference type="PROSITE-ProRule" id="PRU00498"/>
    </source>
</evidence>
<evidence type="ECO:0000255" key="6">
    <source>
        <dbReference type="PROSITE-ProRule" id="PRU10003"/>
    </source>
</evidence>
<evidence type="ECO:0000256" key="7">
    <source>
        <dbReference type="SAM" id="MobiDB-lite"/>
    </source>
</evidence>
<evidence type="ECO:0000269" key="8">
    <source>
    </source>
</evidence>
<evidence type="ECO:0000269" key="9">
    <source>
    </source>
</evidence>
<evidence type="ECO:0000303" key="10">
    <source>
    </source>
</evidence>
<evidence type="ECO:0000303" key="11">
    <source>
    </source>
</evidence>
<evidence type="ECO:0000305" key="12"/>
<evidence type="ECO:0000312" key="13">
    <source>
        <dbReference type="EMBL" id="ABA02245.1"/>
    </source>
</evidence>
<accession>Q3S2U3</accession>
<feature type="chain" id="PRO_0000436289" description="3-hydroxy-3-methylglutaryl coenzyme A reductase mokG">
    <location>
        <begin position="1"/>
        <end position="1052"/>
    </location>
</feature>
<feature type="transmembrane region" description="Helical" evidence="3">
    <location>
        <begin position="223"/>
        <end position="243"/>
    </location>
</feature>
<feature type="transmembrane region" description="Helical" evidence="3">
    <location>
        <begin position="253"/>
        <end position="273"/>
    </location>
</feature>
<feature type="transmembrane region" description="Helical" evidence="3">
    <location>
        <begin position="279"/>
        <end position="299"/>
    </location>
</feature>
<feature type="transmembrane region" description="Helical" evidence="3">
    <location>
        <begin position="349"/>
        <end position="369"/>
    </location>
</feature>
<feature type="transmembrane region" description="Helical" evidence="3">
    <location>
        <begin position="378"/>
        <end position="398"/>
    </location>
</feature>
<feature type="transmembrane region" description="Helical" evidence="3">
    <location>
        <begin position="440"/>
        <end position="460"/>
    </location>
</feature>
<feature type="domain" description="SSD" evidence="4">
    <location>
        <begin position="224"/>
        <end position="403"/>
    </location>
</feature>
<feature type="region of interest" description="Linker" evidence="1">
    <location>
        <begin position="461"/>
        <end position="617"/>
    </location>
</feature>
<feature type="region of interest" description="Disordered" evidence="7">
    <location>
        <begin position="571"/>
        <end position="594"/>
    </location>
</feature>
<feature type="region of interest" description="Catalytic" evidence="1">
    <location>
        <begin position="618"/>
        <end position="1044"/>
    </location>
</feature>
<feature type="compositionally biased region" description="Low complexity" evidence="7">
    <location>
        <begin position="584"/>
        <end position="594"/>
    </location>
</feature>
<feature type="active site" description="Charge relay system" evidence="1">
    <location>
        <position position="734"/>
    </location>
</feature>
<feature type="active site" description="Charge relay system" evidence="1">
    <location>
        <position position="867"/>
    </location>
</feature>
<feature type="active site" description="Charge relay system" evidence="1">
    <location>
        <position position="943"/>
    </location>
</feature>
<feature type="active site" description="Proton donor" evidence="6">
    <location>
        <position position="1039"/>
    </location>
</feature>
<feature type="glycosylation site" description="N-linked (GlcNAc...) asparagine" evidence="5">
    <location>
        <position position="798"/>
    </location>
</feature>
<feature type="glycosylation site" description="N-linked (GlcNAc...) asparagine" evidence="5">
    <location>
        <position position="1043"/>
    </location>
</feature>
<protein>
    <recommendedName>
        <fullName evidence="12">3-hydroxy-3-methylglutaryl coenzyme A reductase mokG</fullName>
        <shortName evidence="10">HMG-CoA reductase</shortName>
        <ecNumber>1.1.1.34</ecNumber>
    </recommendedName>
    <alternativeName>
        <fullName evidence="10">Monacolin K biosynthesis protein G</fullName>
    </alternativeName>
</protein>
<keyword id="KW-0256">Endoplasmic reticulum</keyword>
<keyword id="KW-0325">Glycoprotein</keyword>
<keyword id="KW-0472">Membrane</keyword>
<keyword id="KW-0521">NADP</keyword>
<keyword id="KW-0560">Oxidoreductase</keyword>
<keyword id="KW-0812">Transmembrane</keyword>
<keyword id="KW-1133">Transmembrane helix</keyword>
<name>MOKG_MONPI</name>
<dbReference type="EC" id="1.1.1.34"/>
<dbReference type="EMBL" id="DQ176595">
    <property type="protein sequence ID" value="ABA02245.1"/>
    <property type="molecule type" value="Genomic_DNA"/>
</dbReference>
<dbReference type="SMR" id="Q3S2U3"/>
<dbReference type="GlyCosmos" id="Q3S2U3">
    <property type="glycosylation" value="2 sites, No reported glycans"/>
</dbReference>
<dbReference type="UniPathway" id="UPA00875"/>
<dbReference type="GO" id="GO:0005789">
    <property type="term" value="C:endoplasmic reticulum membrane"/>
    <property type="evidence" value="ECO:0007669"/>
    <property type="project" value="UniProtKB-SubCell"/>
</dbReference>
<dbReference type="GO" id="GO:0005778">
    <property type="term" value="C:peroxisomal membrane"/>
    <property type="evidence" value="ECO:0007669"/>
    <property type="project" value="TreeGrafter"/>
</dbReference>
<dbReference type="GO" id="GO:0004420">
    <property type="term" value="F:hydroxymethylglutaryl-CoA reductase (NADPH) activity"/>
    <property type="evidence" value="ECO:0007669"/>
    <property type="project" value="UniProtKB-EC"/>
</dbReference>
<dbReference type="GO" id="GO:0015936">
    <property type="term" value="P:coenzyme A metabolic process"/>
    <property type="evidence" value="ECO:0007669"/>
    <property type="project" value="InterPro"/>
</dbReference>
<dbReference type="GO" id="GO:0006696">
    <property type="term" value="P:ergosterol biosynthetic process"/>
    <property type="evidence" value="ECO:0007669"/>
    <property type="project" value="TreeGrafter"/>
</dbReference>
<dbReference type="GO" id="GO:0008299">
    <property type="term" value="P:isoprenoid biosynthetic process"/>
    <property type="evidence" value="ECO:0007669"/>
    <property type="project" value="InterPro"/>
</dbReference>
<dbReference type="CDD" id="cd00643">
    <property type="entry name" value="HMG-CoA_reductase_classI"/>
    <property type="match status" value="1"/>
</dbReference>
<dbReference type="FunFam" id="3.30.70.420:FF:000001">
    <property type="entry name" value="3-hydroxy-3-methylglutaryl coenzyme A reductase"/>
    <property type="match status" value="1"/>
</dbReference>
<dbReference type="FunFam" id="3.90.770.10:FF:000001">
    <property type="entry name" value="3-hydroxy-3-methylglutaryl coenzyme A reductase"/>
    <property type="match status" value="1"/>
</dbReference>
<dbReference type="Gene3D" id="3.90.770.10">
    <property type="entry name" value="3-hydroxy-3-methylglutaryl-coenzyme A Reductase, Chain A, domain 2"/>
    <property type="match status" value="1"/>
</dbReference>
<dbReference type="Gene3D" id="1.10.3270.10">
    <property type="entry name" value="HMGR, N-terminal domain"/>
    <property type="match status" value="1"/>
</dbReference>
<dbReference type="Gene3D" id="3.30.70.420">
    <property type="entry name" value="Hydroxymethylglutaryl-CoA reductase, class I/II, NAD/NADP-binding domain"/>
    <property type="match status" value="1"/>
</dbReference>
<dbReference type="InterPro" id="IPR025583">
    <property type="entry name" value="HMG-CoA_N_dom"/>
</dbReference>
<dbReference type="InterPro" id="IPR002202">
    <property type="entry name" value="HMG_CoA_Rdtase"/>
</dbReference>
<dbReference type="InterPro" id="IPR023074">
    <property type="entry name" value="HMG_CoA_Rdtase_cat_sf"/>
</dbReference>
<dbReference type="InterPro" id="IPR023076">
    <property type="entry name" value="HMG_CoA_Rdtase_CS"/>
</dbReference>
<dbReference type="InterPro" id="IPR004554">
    <property type="entry name" value="HMG_CoA_Rdtase_eu_arc"/>
</dbReference>
<dbReference type="InterPro" id="IPR023282">
    <property type="entry name" value="HMG_CoA_Rdtase_N"/>
</dbReference>
<dbReference type="InterPro" id="IPR009023">
    <property type="entry name" value="HMG_CoA_Rdtase_NAD(P)-bd_sf"/>
</dbReference>
<dbReference type="InterPro" id="IPR009029">
    <property type="entry name" value="HMG_CoA_Rdtase_sub-bd_dom_sf"/>
</dbReference>
<dbReference type="InterPro" id="IPR053958">
    <property type="entry name" value="HMGCR/SNAP/NPC1-like_SSD"/>
</dbReference>
<dbReference type="InterPro" id="IPR000731">
    <property type="entry name" value="SSD"/>
</dbReference>
<dbReference type="NCBIfam" id="TIGR00533">
    <property type="entry name" value="HMG_CoA_R_NADP"/>
    <property type="match status" value="1"/>
</dbReference>
<dbReference type="PANTHER" id="PTHR10572">
    <property type="entry name" value="3-HYDROXY-3-METHYLGLUTARYL-COENZYME A REDUCTASE"/>
    <property type="match status" value="1"/>
</dbReference>
<dbReference type="PANTHER" id="PTHR10572:SF24">
    <property type="entry name" value="3-HYDROXY-3-METHYLGLUTARYL-COENZYME A REDUCTASE"/>
    <property type="match status" value="1"/>
</dbReference>
<dbReference type="Pfam" id="PF00368">
    <property type="entry name" value="HMG-CoA_red"/>
    <property type="match status" value="1"/>
</dbReference>
<dbReference type="Pfam" id="PF13323">
    <property type="entry name" value="HPIH"/>
    <property type="match status" value="1"/>
</dbReference>
<dbReference type="Pfam" id="PF12349">
    <property type="entry name" value="Sterol-sensing"/>
    <property type="match status" value="1"/>
</dbReference>
<dbReference type="PRINTS" id="PR00071">
    <property type="entry name" value="HMGCOARDTASE"/>
</dbReference>
<dbReference type="SUPFAM" id="SSF55035">
    <property type="entry name" value="NAD-binding domain of HMG-CoA reductase"/>
    <property type="match status" value="1"/>
</dbReference>
<dbReference type="SUPFAM" id="SSF56542">
    <property type="entry name" value="Substrate-binding domain of HMG-CoA reductase"/>
    <property type="match status" value="1"/>
</dbReference>
<dbReference type="PROSITE" id="PS00066">
    <property type="entry name" value="HMG_COA_REDUCTASE_1"/>
    <property type="match status" value="1"/>
</dbReference>
<dbReference type="PROSITE" id="PS00318">
    <property type="entry name" value="HMG_COA_REDUCTASE_2"/>
    <property type="match status" value="1"/>
</dbReference>
<dbReference type="PROSITE" id="PS01192">
    <property type="entry name" value="HMG_COA_REDUCTASE_3"/>
    <property type="match status" value="1"/>
</dbReference>
<dbReference type="PROSITE" id="PS50065">
    <property type="entry name" value="HMG_COA_REDUCTASE_4"/>
    <property type="match status" value="1"/>
</dbReference>
<dbReference type="PROSITE" id="PS50156">
    <property type="entry name" value="SSD"/>
    <property type="match status" value="1"/>
</dbReference>
<gene>
    <name evidence="10" type="primary">mokG</name>
</gene>
<proteinExistence type="evidence at protein level"/>
<comment type="function">
    <text evidence="2 10 11">HMG-CoA reductase; part of the gene cluster that mediates the biosynthesis of monakolin K, also known as lovastatin, and which acts as a potent competitive inhibitor of HMG-CoA reductase (PubMed:18578535). Monakolin K biosynthesis is performed in two stages (PubMed:19693441). The first stage is catalyzed by the nonaketide synthase mokA, which belongs to type I polyketide synthases and catalyzes the iterative nine-step formation of the polyketide (PubMed:18578535, PubMed:19693441). This PKS stage is completed by the action of dehydrogenase mokE, which catalyzes the NADPH-dependent reduction of the unsaturated tetra-, penta- and heptaketide intermediates that arise during the mokA-mediated biosynthesis of the nonaketide chain and leads to dihydromonacolin L (PubMed:19693441). Covalently bound dihydromonacolin L is released from mokA by the mokD esterase (By similarity). Conversion of dihydromonacolin L into monacolin L and then monacolin J is subsequently performed with the participation of molecular oxygen and P450 monoogygenase mokC (PubMed:19693441). Finally, mokF performs the conversion of monacoline J to monacoline K through the addition of the side-chain diketide moiety (2R)-2-methylbutanoate produced by the diketide synthase mokB (PubMed:19693441). HMG-CoA reductase mokG may act as a down-regulator of monacolin K production (PubMed:18578535).</text>
</comment>
<comment type="catalytic activity">
    <reaction>
        <text>(R)-mevalonate + 2 NADP(+) + CoA = (3S)-3-hydroxy-3-methylglutaryl-CoA + 2 NADPH + 2 H(+)</text>
        <dbReference type="Rhea" id="RHEA:15989"/>
        <dbReference type="ChEBI" id="CHEBI:15378"/>
        <dbReference type="ChEBI" id="CHEBI:36464"/>
        <dbReference type="ChEBI" id="CHEBI:43074"/>
        <dbReference type="ChEBI" id="CHEBI:57287"/>
        <dbReference type="ChEBI" id="CHEBI:57783"/>
        <dbReference type="ChEBI" id="CHEBI:58349"/>
        <dbReference type="EC" id="1.1.1.34"/>
    </reaction>
</comment>
<comment type="pathway">
    <text evidence="10">Polyketide biosynthesis; lovastatin biosynthesis.</text>
</comment>
<comment type="subcellular location">
    <subcellularLocation>
        <location evidence="1">Endoplasmic reticulum membrane</location>
        <topology evidence="3">Multi-pass membrane protein</topology>
    </subcellularLocation>
</comment>
<comment type="induction">
    <text evidence="8">Expression is controlled by the monacolin K cluster transcription regulator mokH (PubMed:19968298).</text>
</comment>
<comment type="biotechnology">
    <text evidence="9">Monacoline K acts as an inhibitor of HMG-CoA reductase involved in cholesterogenesis (PubMed:21821946). Its hypocholesterolemic activity might be useful for lowering cholesterol levels in the blood and reduce artherosclerosis and coronary heart disease (PubMed:21821946).</text>
</comment>
<comment type="similarity">
    <text evidence="12">Belongs to the HMG-CoA reductase family.</text>
</comment>